<reference key="1">
    <citation type="journal article" date="1989" name="J. Biol. Chem.">
        <title>Precursors of Androctonus australis scorpion neurotoxins. Structures of precursors, processing outcomes, and expression of a functional recombinant toxin II.</title>
        <authorList>
            <person name="Bougis P.E."/>
            <person name="Rochat H."/>
            <person name="Smith L.A."/>
        </authorList>
    </citation>
    <scope>NUCLEOTIDE SEQUENCE [MRNA]</scope>
    <source>
        <strain>Hector</strain>
        <tissue>Venom gland</tissue>
    </source>
</reference>
<reference key="2">
    <citation type="journal article" date="1990" name="Biochemistry">
        <title>Neurotoxins active on insects: amino acid sequences, chemical modifications, and secondary structure estimation by circular dichroism of toxins from the scorpion Androctonus australis hector.</title>
        <authorList>
            <person name="Loret E.P."/>
            <person name="Mansuelle P."/>
            <person name="Rochat H."/>
            <person name="Granier C."/>
        </authorList>
    </citation>
    <scope>PROTEIN SEQUENCE OF 19-88</scope>
    <scope>FUNCTION</scope>
    <scope>BIOASSAY</scope>
    <scope>TOXIC DOSE</scope>
    <scope>SUBCELLULAR LOCATION</scope>
    <source>
        <strain>Hector</strain>
        <tissue>Venom</tissue>
    </source>
</reference>
<reference key="3">
    <citation type="journal article" date="1982" name="Int. J. Pept. Protein Res.">
        <title>Covalent structure of the insect toxin of the North African scorpion Androctonus australis Hector.</title>
        <authorList>
            <person name="Darbon H."/>
            <person name="Zlotkin E."/>
            <person name="Kopeyan C."/>
            <person name="van Rietschoten J."/>
            <person name="Rochat H."/>
        </authorList>
    </citation>
    <scope>PROTEIN SEQUENCE OF 19-88</scope>
    <scope>SUBCELLULAR LOCATION</scope>
    <scope>DISULFIDE BONDS</scope>
</reference>
<reference key="4">
    <citation type="journal article" date="2000" name="Biochimie">
        <title>AaIT: from neurotoxin to insecticide.</title>
        <authorList>
            <person name="Zlotkin E."/>
            <person name="Fishman Y."/>
            <person name="Elazar M."/>
        </authorList>
    </citation>
    <scope>BIOTECHNOLOGY</scope>
    <scope>REVIEW</scope>
</reference>
<reference key="5">
    <citation type="journal article" date="2016" name="Insect Sci.">
        <title>Transgenic plants expressing the AaIT/GNA fusion protein show increased resistance and toxicity to both chewing and sucking pests.</title>
        <authorList>
            <person name="Liu S.M."/>
            <person name="Li J."/>
            <person name="Zhu J.Q."/>
            <person name="Wang X.W."/>
            <person name="Wang C.S."/>
            <person name="Liu S.S."/>
            <person name="Chen X.X."/>
            <person name="Li S."/>
        </authorList>
    </citation>
    <scope>BIOTECHNOLOGY</scope>
    <scope>RECOMBINANT EXPRESSION AS A CHIMERIC VARIANT IN TRANSGENIC PLANTS</scope>
</reference>
<reference key="6">
    <citation type="journal article" date="1991" name="Biochemistry">
        <title>Two-dimensional 1H nuclear magnetic resonance study of AaH IT, an anti-insect toxin from the scorpion Androctonus australis hector. Sequential resonance assignments and folding of the polypeptide chain.</title>
        <authorList>
            <person name="Darbon H."/>
            <person name="Weber C."/>
            <person name="Braun W."/>
        </authorList>
    </citation>
    <scope>STRUCTURE BY NMR</scope>
    <scope>DISULFIDE BONDS</scope>
    <source>
        <strain>Hector</strain>
    </source>
</reference>
<name>SIX1_ANDAU</name>
<protein>
    <recommendedName>
        <fullName evidence="9">Beta-insect excitatory toxin 1</fullName>
    </recommendedName>
    <alternativeName>
        <fullName evidence="8">AaH IT1</fullName>
        <shortName evidence="8">AaH IT</shortName>
        <shortName>AaHIT</shortName>
        <shortName>AaHIT1</shortName>
        <shortName evidence="7">AaIT</shortName>
        <shortName>AaIT1</shortName>
    </alternativeName>
</protein>
<keyword id="KW-0903">Direct protein sequencing</keyword>
<keyword id="KW-1015">Disulfide bond</keyword>
<keyword id="KW-0872">Ion channel impairing toxin</keyword>
<keyword id="KW-0528">Neurotoxin</keyword>
<keyword id="KW-0964">Secreted</keyword>
<keyword id="KW-0732">Signal</keyword>
<keyword id="KW-0800">Toxin</keyword>
<keyword id="KW-0738">Voltage-gated sodium channel impairing toxin</keyword>
<evidence type="ECO:0000255" key="1">
    <source>
        <dbReference type="PROSITE-ProRule" id="PRU01210"/>
    </source>
</evidence>
<evidence type="ECO:0000269" key="2">
    <source>
    </source>
</evidence>
<evidence type="ECO:0000269" key="3">
    <source>
    </source>
</evidence>
<evidence type="ECO:0000269" key="4">
    <source>
    </source>
</evidence>
<evidence type="ECO:0000269" key="5">
    <source>
    </source>
</evidence>
<evidence type="ECO:0000269" key="6">
    <source>
    </source>
</evidence>
<evidence type="ECO:0000303" key="7">
    <source>
    </source>
</evidence>
<evidence type="ECO:0000303" key="8">
    <source>
    </source>
</evidence>
<evidence type="ECO:0000305" key="9"/>
<evidence type="ECO:0000305" key="10">
    <source>
    </source>
</evidence>
<evidence type="ECO:0000305" key="11">
    <source>
    </source>
</evidence>
<organism>
    <name type="scientific">Androctonus australis</name>
    <name type="common">Sahara scorpion</name>
    <dbReference type="NCBI Taxonomy" id="6858"/>
    <lineage>
        <taxon>Eukaryota</taxon>
        <taxon>Metazoa</taxon>
        <taxon>Ecdysozoa</taxon>
        <taxon>Arthropoda</taxon>
        <taxon>Chelicerata</taxon>
        <taxon>Arachnida</taxon>
        <taxon>Scorpiones</taxon>
        <taxon>Buthida</taxon>
        <taxon>Buthoidea</taxon>
        <taxon>Buthidae</taxon>
        <taxon>Androctonus</taxon>
    </lineage>
</organism>
<comment type="function">
    <text evidence="4">Excitatory insect beta-toxins induce a spastic paralysis. They bind voltage-independently at site-4 of sodium channels (Nav) and shift the voltage of activation toward more negative potentials thereby affecting sodium channel activation and promoting spontaneous and repetitive firing. This toxin is active only on insects (PubMed:2334710).</text>
</comment>
<comment type="subcellular location">
    <subcellularLocation>
        <location evidence="4 6">Secreted</location>
    </subcellularLocation>
</comment>
<comment type="tissue specificity">
    <text evidence="10 11">Expressed by the venom gland.</text>
</comment>
<comment type="domain">
    <text evidence="9">Has the structural arrangement of an alpha-helix connected to antiparallel beta-sheets by disulfide bonds (CS-alpha/beta).</text>
</comment>
<comment type="toxic dose">
    <text evidence="4">PD(50) is 0.099 ng/mg of insects.</text>
</comment>
<comment type="biotechnology">
    <text evidence="2">Could be used to reinforce the natural insecticidal ability of baculoviruses. The insertion of the gene coding for AaHIT causes a higher killing speed of insects by the baculovirus (particularly against lepidopterans).</text>
</comment>
<comment type="biotechnology">
    <text evidence="5">Could be considered as a biological insecticide candidate, when fused to Galanthus nivalis agglutinin (GNA), a protein with the potential to cross the insect gut. This chimeric AaIT/GNA variant shows increased resistance and toxicity to both chewing and sucking pests (the cotton bollworm Helicoverpa armigera, the whitefly Bemisia tabaci, and the rice brown planthopper Nilaparvata lugens), when expressed in transgenic plants.</text>
</comment>
<comment type="similarity">
    <text evidence="9">Belongs to the long (4 C-C) scorpion toxin superfamily. Sodium channel inhibitor family. Beta subfamily.</text>
</comment>
<dbReference type="EMBL" id="M27706">
    <property type="protein sequence ID" value="AAA29951.1"/>
    <property type="molecule type" value="mRNA"/>
</dbReference>
<dbReference type="EMBL" id="M27705">
    <property type="protein sequence ID" value="AAA29950.1"/>
    <property type="molecule type" value="mRNA"/>
</dbReference>
<dbReference type="BMRB" id="P01497"/>
<dbReference type="SMR" id="P01497"/>
<dbReference type="ABCD" id="P01497">
    <property type="antibodies" value="37 sequenced antibodies"/>
</dbReference>
<dbReference type="GO" id="GO:0005576">
    <property type="term" value="C:extracellular region"/>
    <property type="evidence" value="ECO:0007669"/>
    <property type="project" value="UniProtKB-SubCell"/>
</dbReference>
<dbReference type="GO" id="GO:0019871">
    <property type="term" value="F:sodium channel inhibitor activity"/>
    <property type="evidence" value="ECO:0007669"/>
    <property type="project" value="InterPro"/>
</dbReference>
<dbReference type="GO" id="GO:0090729">
    <property type="term" value="F:toxin activity"/>
    <property type="evidence" value="ECO:0007669"/>
    <property type="project" value="UniProtKB-KW"/>
</dbReference>
<dbReference type="GO" id="GO:0006952">
    <property type="term" value="P:defense response"/>
    <property type="evidence" value="ECO:0007669"/>
    <property type="project" value="InterPro"/>
</dbReference>
<dbReference type="CDD" id="cd23106">
    <property type="entry name" value="neurotoxins_LC_scorpion"/>
    <property type="match status" value="1"/>
</dbReference>
<dbReference type="Gene3D" id="3.30.30.10">
    <property type="entry name" value="Knottin, scorpion toxin-like"/>
    <property type="match status" value="1"/>
</dbReference>
<dbReference type="InterPro" id="IPR044062">
    <property type="entry name" value="LCN-type_CS_alpha_beta_dom"/>
</dbReference>
<dbReference type="InterPro" id="IPR003614">
    <property type="entry name" value="Scorpion_toxin-like"/>
</dbReference>
<dbReference type="InterPro" id="IPR036574">
    <property type="entry name" value="Scorpion_toxin-like_sf"/>
</dbReference>
<dbReference type="InterPro" id="IPR002061">
    <property type="entry name" value="Scorpion_toxinL/defensin"/>
</dbReference>
<dbReference type="Pfam" id="PF00537">
    <property type="entry name" value="Toxin_3"/>
    <property type="match status" value="1"/>
</dbReference>
<dbReference type="SMART" id="SM00505">
    <property type="entry name" value="Knot1"/>
    <property type="match status" value="1"/>
</dbReference>
<dbReference type="SUPFAM" id="SSF57095">
    <property type="entry name" value="Scorpion toxin-like"/>
    <property type="match status" value="1"/>
</dbReference>
<dbReference type="PROSITE" id="PS51863">
    <property type="entry name" value="LCN_CSAB"/>
    <property type="match status" value="1"/>
</dbReference>
<sequence length="88" mass="9852">MKFLLLFLVVLPIMGVFGKKNGYAVDSSGKAPECLLSNYCNNECTKVHYADKGYCCLLSCYCFGLNDDKKVLEISDTRKSYCDTTIIN</sequence>
<accession>P01497</accession>
<feature type="signal peptide" evidence="10 11">
    <location>
        <begin position="1"/>
        <end position="18"/>
    </location>
</feature>
<feature type="chain" id="PRO_0000035187" description="Beta-insect excitatory toxin 1" evidence="4 6">
    <location>
        <begin position="19"/>
        <end position="88"/>
    </location>
</feature>
<feature type="domain" description="LCN-type CS-alpha/beta" evidence="1">
    <location>
        <begin position="20"/>
        <end position="83"/>
    </location>
</feature>
<feature type="disulfide bond" evidence="3">
    <location>
        <begin position="34"/>
        <end position="55"/>
    </location>
</feature>
<feature type="disulfide bond" evidence="3">
    <location>
        <begin position="40"/>
        <end position="60"/>
    </location>
</feature>
<feature type="disulfide bond" evidence="3">
    <location>
        <begin position="44"/>
        <end position="62"/>
    </location>
</feature>
<feature type="disulfide bond" evidence="3">
    <location>
        <begin position="56"/>
        <end position="82"/>
    </location>
</feature>
<feature type="sequence variant">
    <original>F</original>
    <variation>L</variation>
    <location>
        <position position="17"/>
    </location>
</feature>
<feature type="sequence conflict" description="In Ref. 3; AA sequence." evidence="9" ref="3">
    <original>E</original>
    <variation>Q</variation>
    <location>
        <position position="43"/>
    </location>
</feature>
<proteinExistence type="evidence at protein level"/>